<evidence type="ECO:0000255" key="1">
    <source>
        <dbReference type="HAMAP-Rule" id="MF_01337"/>
    </source>
</evidence>
<evidence type="ECO:0000305" key="2"/>
<gene>
    <name evidence="1" type="primary">rplR</name>
    <name type="ordered locus">ML1843</name>
    <name type="ORF">MLCB2492.20</name>
</gene>
<organism>
    <name type="scientific">Mycobacterium leprae (strain TN)</name>
    <dbReference type="NCBI Taxonomy" id="272631"/>
    <lineage>
        <taxon>Bacteria</taxon>
        <taxon>Bacillati</taxon>
        <taxon>Actinomycetota</taxon>
        <taxon>Actinomycetes</taxon>
        <taxon>Mycobacteriales</taxon>
        <taxon>Mycobacteriaceae</taxon>
        <taxon>Mycobacterium</taxon>
    </lineage>
</organism>
<proteinExistence type="inferred from homology"/>
<comment type="function">
    <text evidence="1">This is one of the proteins that bind and probably mediate the attachment of the 5S RNA into the large ribosomal subunit, where it forms part of the central protuberance.</text>
</comment>
<comment type="subunit">
    <text evidence="1">Part of the 50S ribosomal subunit; part of the 5S rRNA/L5/L18/L25 subcomplex. Contacts the 5S and 23S rRNAs.</text>
</comment>
<comment type="similarity">
    <text evidence="1">Belongs to the universal ribosomal protein uL18 family.</text>
</comment>
<comment type="sequence caution" evidence="2">
    <conflict type="erroneous initiation">
        <sequence resource="EMBL-CDS" id="CAC30797"/>
    </conflict>
</comment>
<feature type="chain" id="PRO_0000131298" description="Large ribosomal subunit protein uL18">
    <location>
        <begin position="1"/>
        <end position="122"/>
    </location>
</feature>
<keyword id="KW-1185">Reference proteome</keyword>
<keyword id="KW-0687">Ribonucleoprotein</keyword>
<keyword id="KW-0689">Ribosomal protein</keyword>
<keyword id="KW-0694">RNA-binding</keyword>
<keyword id="KW-0699">rRNA-binding</keyword>
<accession>O32999</accession>
<protein>
    <recommendedName>
        <fullName evidence="1">Large ribosomal subunit protein uL18</fullName>
    </recommendedName>
    <alternativeName>
        <fullName evidence="2">50S ribosomal protein L18</fullName>
    </alternativeName>
</protein>
<name>RL18_MYCLE</name>
<sequence>MVQSVSAIRRVSRLRRHARLRKKVSGTSERPRLVVNRSARHIHVQLVNDVTGTTVAAASSIEADVRGLQGDKKVRSVRVGQLIAERAKAAGINTVVFDRGGYTYGGRIAALADSVRENGLNF</sequence>
<reference key="1">
    <citation type="journal article" date="2001" name="Nature">
        <title>Massive gene decay in the leprosy bacillus.</title>
        <authorList>
            <person name="Cole S.T."/>
            <person name="Eiglmeier K."/>
            <person name="Parkhill J."/>
            <person name="James K.D."/>
            <person name="Thomson N.R."/>
            <person name="Wheeler P.R."/>
            <person name="Honore N."/>
            <person name="Garnier T."/>
            <person name="Churcher C.M."/>
            <person name="Harris D.E."/>
            <person name="Mungall K.L."/>
            <person name="Basham D."/>
            <person name="Brown D."/>
            <person name="Chillingworth T."/>
            <person name="Connor R."/>
            <person name="Davies R.M."/>
            <person name="Devlin K."/>
            <person name="Duthoy S."/>
            <person name="Feltwell T."/>
            <person name="Fraser A."/>
            <person name="Hamlin N."/>
            <person name="Holroyd S."/>
            <person name="Hornsby T."/>
            <person name="Jagels K."/>
            <person name="Lacroix C."/>
            <person name="Maclean J."/>
            <person name="Moule S."/>
            <person name="Murphy L.D."/>
            <person name="Oliver K."/>
            <person name="Quail M.A."/>
            <person name="Rajandream M.A."/>
            <person name="Rutherford K.M."/>
            <person name="Rutter S."/>
            <person name="Seeger K."/>
            <person name="Simon S."/>
            <person name="Simmonds M."/>
            <person name="Skelton J."/>
            <person name="Squares R."/>
            <person name="Squares S."/>
            <person name="Stevens K."/>
            <person name="Taylor K."/>
            <person name="Whitehead S."/>
            <person name="Woodward J.R."/>
            <person name="Barrell B.G."/>
        </authorList>
    </citation>
    <scope>NUCLEOTIDE SEQUENCE [LARGE SCALE GENOMIC DNA]</scope>
    <source>
        <strain>TN</strain>
    </source>
</reference>
<dbReference type="EMBL" id="Z98756">
    <property type="protein sequence ID" value="CAB11452.1"/>
    <property type="molecule type" value="Genomic_DNA"/>
</dbReference>
<dbReference type="EMBL" id="AL583923">
    <property type="protein sequence ID" value="CAC30797.1"/>
    <property type="status" value="ALT_INIT"/>
    <property type="molecule type" value="Genomic_DNA"/>
</dbReference>
<dbReference type="PIR" id="E87139">
    <property type="entry name" value="E87139"/>
</dbReference>
<dbReference type="PIR" id="T45382">
    <property type="entry name" value="T45382"/>
</dbReference>
<dbReference type="RefSeq" id="WP_041323018.1">
    <property type="nucleotide sequence ID" value="NC_002677.1"/>
</dbReference>
<dbReference type="SMR" id="O32999"/>
<dbReference type="STRING" id="272631.gene:17575691"/>
<dbReference type="KEGG" id="mle:ML1843"/>
<dbReference type="Leproma" id="ML1843"/>
<dbReference type="eggNOG" id="COG0256">
    <property type="taxonomic scope" value="Bacteria"/>
</dbReference>
<dbReference type="HOGENOM" id="CLU_098841_0_1_11"/>
<dbReference type="Proteomes" id="UP000000806">
    <property type="component" value="Chromosome"/>
</dbReference>
<dbReference type="GO" id="GO:0022625">
    <property type="term" value="C:cytosolic large ribosomal subunit"/>
    <property type="evidence" value="ECO:0007669"/>
    <property type="project" value="TreeGrafter"/>
</dbReference>
<dbReference type="GO" id="GO:0008097">
    <property type="term" value="F:5S rRNA binding"/>
    <property type="evidence" value="ECO:0007669"/>
    <property type="project" value="TreeGrafter"/>
</dbReference>
<dbReference type="GO" id="GO:0003735">
    <property type="term" value="F:structural constituent of ribosome"/>
    <property type="evidence" value="ECO:0007669"/>
    <property type="project" value="InterPro"/>
</dbReference>
<dbReference type="GO" id="GO:0006412">
    <property type="term" value="P:translation"/>
    <property type="evidence" value="ECO:0007669"/>
    <property type="project" value="UniProtKB-UniRule"/>
</dbReference>
<dbReference type="CDD" id="cd00432">
    <property type="entry name" value="Ribosomal_L18_L5e"/>
    <property type="match status" value="1"/>
</dbReference>
<dbReference type="FunFam" id="3.30.420.100:FF:000001">
    <property type="entry name" value="50S ribosomal protein L18"/>
    <property type="match status" value="1"/>
</dbReference>
<dbReference type="Gene3D" id="3.30.420.100">
    <property type="match status" value="1"/>
</dbReference>
<dbReference type="HAMAP" id="MF_01337_B">
    <property type="entry name" value="Ribosomal_uL18_B"/>
    <property type="match status" value="1"/>
</dbReference>
<dbReference type="InterPro" id="IPR004389">
    <property type="entry name" value="Ribosomal_uL18_bac-type"/>
</dbReference>
<dbReference type="InterPro" id="IPR005484">
    <property type="entry name" value="Ribosomal_uL18_bac/euk"/>
</dbReference>
<dbReference type="NCBIfam" id="TIGR00060">
    <property type="entry name" value="L18_bact"/>
    <property type="match status" value="1"/>
</dbReference>
<dbReference type="PANTHER" id="PTHR12899">
    <property type="entry name" value="39S RIBOSOMAL PROTEIN L18, MITOCHONDRIAL"/>
    <property type="match status" value="1"/>
</dbReference>
<dbReference type="PANTHER" id="PTHR12899:SF3">
    <property type="entry name" value="LARGE RIBOSOMAL SUBUNIT PROTEIN UL18M"/>
    <property type="match status" value="1"/>
</dbReference>
<dbReference type="Pfam" id="PF00861">
    <property type="entry name" value="Ribosomal_L18p"/>
    <property type="match status" value="1"/>
</dbReference>
<dbReference type="SUPFAM" id="SSF53137">
    <property type="entry name" value="Translational machinery components"/>
    <property type="match status" value="1"/>
</dbReference>